<name>RL15_BURCJ</name>
<keyword id="KW-0687">Ribonucleoprotein</keyword>
<keyword id="KW-0689">Ribosomal protein</keyword>
<keyword id="KW-0694">RNA-binding</keyword>
<keyword id="KW-0699">rRNA-binding</keyword>
<reference key="1">
    <citation type="journal article" date="2009" name="J. Bacteriol.">
        <title>The genome of Burkholderia cenocepacia J2315, an epidemic pathogen of cystic fibrosis patients.</title>
        <authorList>
            <person name="Holden M.T."/>
            <person name="Seth-Smith H.M."/>
            <person name="Crossman L.C."/>
            <person name="Sebaihia M."/>
            <person name="Bentley S.D."/>
            <person name="Cerdeno-Tarraga A.M."/>
            <person name="Thomson N.R."/>
            <person name="Bason N."/>
            <person name="Quail M.A."/>
            <person name="Sharp S."/>
            <person name="Cherevach I."/>
            <person name="Churcher C."/>
            <person name="Goodhead I."/>
            <person name="Hauser H."/>
            <person name="Holroyd N."/>
            <person name="Mungall K."/>
            <person name="Scott P."/>
            <person name="Walker D."/>
            <person name="White B."/>
            <person name="Rose H."/>
            <person name="Iversen P."/>
            <person name="Mil-Homens D."/>
            <person name="Rocha E.P."/>
            <person name="Fialho A.M."/>
            <person name="Baldwin A."/>
            <person name="Dowson C."/>
            <person name="Barrell B.G."/>
            <person name="Govan J.R."/>
            <person name="Vandamme P."/>
            <person name="Hart C.A."/>
            <person name="Mahenthiralingam E."/>
            <person name="Parkhill J."/>
        </authorList>
    </citation>
    <scope>NUCLEOTIDE SEQUENCE [LARGE SCALE GENOMIC DNA]</scope>
    <source>
        <strain>ATCC BAA-245 / DSM 16553 / LMG 16656 / NCTC 13227 / J2315 / CF5610</strain>
    </source>
</reference>
<feature type="chain" id="PRO_1000142784" description="Large ribosomal subunit protein uL15">
    <location>
        <begin position="1"/>
        <end position="144"/>
    </location>
</feature>
<feature type="region of interest" description="Disordered" evidence="2">
    <location>
        <begin position="1"/>
        <end position="56"/>
    </location>
</feature>
<feature type="compositionally biased region" description="Gly residues" evidence="2">
    <location>
        <begin position="21"/>
        <end position="31"/>
    </location>
</feature>
<accession>B4E5D9</accession>
<evidence type="ECO:0000255" key="1">
    <source>
        <dbReference type="HAMAP-Rule" id="MF_01341"/>
    </source>
</evidence>
<evidence type="ECO:0000256" key="2">
    <source>
        <dbReference type="SAM" id="MobiDB-lite"/>
    </source>
</evidence>
<evidence type="ECO:0000305" key="3"/>
<proteinExistence type="inferred from homology"/>
<comment type="function">
    <text evidence="1">Binds to the 23S rRNA.</text>
</comment>
<comment type="subunit">
    <text evidence="1">Part of the 50S ribosomal subunit.</text>
</comment>
<comment type="similarity">
    <text evidence="1">Belongs to the universal ribosomal protein uL15 family.</text>
</comment>
<organism>
    <name type="scientific">Burkholderia cenocepacia (strain ATCC BAA-245 / DSM 16553 / LMG 16656 / NCTC 13227 / J2315 / CF5610)</name>
    <name type="common">Burkholderia cepacia (strain J2315)</name>
    <dbReference type="NCBI Taxonomy" id="216591"/>
    <lineage>
        <taxon>Bacteria</taxon>
        <taxon>Pseudomonadati</taxon>
        <taxon>Pseudomonadota</taxon>
        <taxon>Betaproteobacteria</taxon>
        <taxon>Burkholderiales</taxon>
        <taxon>Burkholderiaceae</taxon>
        <taxon>Burkholderia</taxon>
        <taxon>Burkholderia cepacia complex</taxon>
    </lineage>
</organism>
<sequence>MELNNLKPAAGAKHAKRRVGRGIGSGLGKTAGRGHKGQKSRSGGFHKVGFEGGQMPLQRRLPKRGFTSLTKEFVGEVRLGDLEKLPVDEIDLLALKQAGLVGELTKSAKIIATGELKRKIVVKGLGATKGARAAIEAAGGSFAE</sequence>
<protein>
    <recommendedName>
        <fullName evidence="1">Large ribosomal subunit protein uL15</fullName>
    </recommendedName>
    <alternativeName>
        <fullName evidence="3">50S ribosomal protein L15</fullName>
    </alternativeName>
</protein>
<gene>
    <name evidence="1" type="primary">rplO</name>
    <name type="ordered locus">BceJ2315_02560</name>
    <name type="ORF">BCAL0253</name>
</gene>
<dbReference type="EMBL" id="AM747720">
    <property type="protein sequence ID" value="CAR50564.1"/>
    <property type="molecule type" value="Genomic_DNA"/>
</dbReference>
<dbReference type="RefSeq" id="WP_006482880.1">
    <property type="nucleotide sequence ID" value="NC_011000.1"/>
</dbReference>
<dbReference type="SMR" id="B4E5D9"/>
<dbReference type="GeneID" id="98107141"/>
<dbReference type="KEGG" id="bcj:BCAL0253"/>
<dbReference type="eggNOG" id="COG0200">
    <property type="taxonomic scope" value="Bacteria"/>
</dbReference>
<dbReference type="HOGENOM" id="CLU_055188_4_2_4"/>
<dbReference type="BioCyc" id="BCEN216591:G1G1V-296-MONOMER"/>
<dbReference type="Proteomes" id="UP000001035">
    <property type="component" value="Chromosome 1"/>
</dbReference>
<dbReference type="GO" id="GO:0022625">
    <property type="term" value="C:cytosolic large ribosomal subunit"/>
    <property type="evidence" value="ECO:0007669"/>
    <property type="project" value="TreeGrafter"/>
</dbReference>
<dbReference type="GO" id="GO:0019843">
    <property type="term" value="F:rRNA binding"/>
    <property type="evidence" value="ECO:0007669"/>
    <property type="project" value="UniProtKB-UniRule"/>
</dbReference>
<dbReference type="GO" id="GO:0003735">
    <property type="term" value="F:structural constituent of ribosome"/>
    <property type="evidence" value="ECO:0007669"/>
    <property type="project" value="InterPro"/>
</dbReference>
<dbReference type="GO" id="GO:0006412">
    <property type="term" value="P:translation"/>
    <property type="evidence" value="ECO:0007669"/>
    <property type="project" value="UniProtKB-UniRule"/>
</dbReference>
<dbReference type="Gene3D" id="3.100.10.10">
    <property type="match status" value="1"/>
</dbReference>
<dbReference type="HAMAP" id="MF_01341">
    <property type="entry name" value="Ribosomal_uL15"/>
    <property type="match status" value="1"/>
</dbReference>
<dbReference type="InterPro" id="IPR030878">
    <property type="entry name" value="Ribosomal_uL15"/>
</dbReference>
<dbReference type="InterPro" id="IPR021131">
    <property type="entry name" value="Ribosomal_uL15/eL18"/>
</dbReference>
<dbReference type="InterPro" id="IPR036227">
    <property type="entry name" value="Ribosomal_uL15/eL18_sf"/>
</dbReference>
<dbReference type="InterPro" id="IPR005749">
    <property type="entry name" value="Ribosomal_uL15_bac-type"/>
</dbReference>
<dbReference type="InterPro" id="IPR001196">
    <property type="entry name" value="Ribosomal_uL15_CS"/>
</dbReference>
<dbReference type="NCBIfam" id="TIGR01071">
    <property type="entry name" value="rplO_bact"/>
    <property type="match status" value="1"/>
</dbReference>
<dbReference type="PANTHER" id="PTHR12934">
    <property type="entry name" value="50S RIBOSOMAL PROTEIN L15"/>
    <property type="match status" value="1"/>
</dbReference>
<dbReference type="PANTHER" id="PTHR12934:SF11">
    <property type="entry name" value="LARGE RIBOSOMAL SUBUNIT PROTEIN UL15M"/>
    <property type="match status" value="1"/>
</dbReference>
<dbReference type="Pfam" id="PF00828">
    <property type="entry name" value="Ribosomal_L27A"/>
    <property type="match status" value="1"/>
</dbReference>
<dbReference type="SUPFAM" id="SSF52080">
    <property type="entry name" value="Ribosomal proteins L15p and L18e"/>
    <property type="match status" value="1"/>
</dbReference>
<dbReference type="PROSITE" id="PS00475">
    <property type="entry name" value="RIBOSOMAL_L15"/>
    <property type="match status" value="1"/>
</dbReference>